<evidence type="ECO:0000255" key="1">
    <source>
        <dbReference type="HAMAP-Rule" id="MF_01715"/>
    </source>
</evidence>
<sequence length="335" mass="37786">MGKNIKVSFKHVSKEYDLYQNKSDKIKGLFMPKSQKMQSFWALRDVSFDIHDGETVGLIGINGSGKSTISSIMSGVIPPTQGEVIINGETSLIAIAVGLKGPLTGYENIRLKLLMHGMKSSQINKLMPSIIEFADIGDFINQPIKNYSSGMRSRLGFAISVHTNPDILVIDEALSVGDQTFYEKCVDKINEFKARGKTIVFVSHSLGQVKSLCDRIIWMHHGEIREMGTAQEVAQKYDEFVKWFNKQPNDYKKKYQKEHKENQKAPQKKIYPNPNANKYRLTLFDKIFLTVLIALTILFGTLVATGKSFKGLISEESTTQIEKVVHVDNYDLKLN</sequence>
<feature type="chain" id="PRO_0000092993" description="Teichoic acids export ATP-binding protein TagH">
    <location>
        <begin position="1"/>
        <end position="335"/>
    </location>
</feature>
<feature type="domain" description="ABC transporter" evidence="1">
    <location>
        <begin position="26"/>
        <end position="246"/>
    </location>
</feature>
<feature type="binding site" evidence="1">
    <location>
        <begin position="60"/>
        <end position="67"/>
    </location>
    <ligand>
        <name>ATP</name>
        <dbReference type="ChEBI" id="CHEBI:30616"/>
    </ligand>
</feature>
<dbReference type="EC" id="7.5.2.4" evidence="1"/>
<dbReference type="EMBL" id="AE017262">
    <property type="protein sequence ID" value="AAT03869.1"/>
    <property type="molecule type" value="Genomic_DNA"/>
</dbReference>
<dbReference type="RefSeq" id="WP_003726883.1">
    <property type="nucleotide sequence ID" value="NC_002973.6"/>
</dbReference>
<dbReference type="SMR" id="Q720Z5"/>
<dbReference type="KEGG" id="lmf:LMOf2365_1092"/>
<dbReference type="HOGENOM" id="CLU_000604_1_2_9"/>
<dbReference type="GO" id="GO:0005886">
    <property type="term" value="C:plasma membrane"/>
    <property type="evidence" value="ECO:0007669"/>
    <property type="project" value="UniProtKB-SubCell"/>
</dbReference>
<dbReference type="GO" id="GO:0015438">
    <property type="term" value="F:ABC-type teichoic acid transporter activity"/>
    <property type="evidence" value="ECO:0007669"/>
    <property type="project" value="UniProtKB-EC"/>
</dbReference>
<dbReference type="GO" id="GO:0005524">
    <property type="term" value="F:ATP binding"/>
    <property type="evidence" value="ECO:0007669"/>
    <property type="project" value="UniProtKB-KW"/>
</dbReference>
<dbReference type="GO" id="GO:0016887">
    <property type="term" value="F:ATP hydrolysis activity"/>
    <property type="evidence" value="ECO:0007669"/>
    <property type="project" value="InterPro"/>
</dbReference>
<dbReference type="CDD" id="cd03220">
    <property type="entry name" value="ABC_KpsT_Wzt"/>
    <property type="match status" value="1"/>
</dbReference>
<dbReference type="FunFam" id="3.40.50.300:FF:003010">
    <property type="entry name" value="Teichoic acids export ATP-binding protein TagH"/>
    <property type="match status" value="1"/>
</dbReference>
<dbReference type="Gene3D" id="3.40.50.300">
    <property type="entry name" value="P-loop containing nucleotide triphosphate hydrolases"/>
    <property type="match status" value="1"/>
</dbReference>
<dbReference type="InterPro" id="IPR003593">
    <property type="entry name" value="AAA+_ATPase"/>
</dbReference>
<dbReference type="InterPro" id="IPR003439">
    <property type="entry name" value="ABC_transporter-like_ATP-bd"/>
</dbReference>
<dbReference type="InterPro" id="IPR017871">
    <property type="entry name" value="ABC_transporter-like_CS"/>
</dbReference>
<dbReference type="InterPro" id="IPR015860">
    <property type="entry name" value="ABC_transpr_TagH-like"/>
</dbReference>
<dbReference type="InterPro" id="IPR050683">
    <property type="entry name" value="Bact_Polysacc_Export_ATP-bd"/>
</dbReference>
<dbReference type="InterPro" id="IPR027417">
    <property type="entry name" value="P-loop_NTPase"/>
</dbReference>
<dbReference type="NCBIfam" id="NF010066">
    <property type="entry name" value="PRK13546.1"/>
    <property type="match status" value="1"/>
</dbReference>
<dbReference type="PANTHER" id="PTHR46743">
    <property type="entry name" value="TEICHOIC ACIDS EXPORT ATP-BINDING PROTEIN TAGH"/>
    <property type="match status" value="1"/>
</dbReference>
<dbReference type="PANTHER" id="PTHR46743:SF2">
    <property type="entry name" value="TEICHOIC ACIDS EXPORT ATP-BINDING PROTEIN TAGH"/>
    <property type="match status" value="1"/>
</dbReference>
<dbReference type="Pfam" id="PF00005">
    <property type="entry name" value="ABC_tran"/>
    <property type="match status" value="1"/>
</dbReference>
<dbReference type="SMART" id="SM00382">
    <property type="entry name" value="AAA"/>
    <property type="match status" value="1"/>
</dbReference>
<dbReference type="SUPFAM" id="SSF52540">
    <property type="entry name" value="P-loop containing nucleoside triphosphate hydrolases"/>
    <property type="match status" value="1"/>
</dbReference>
<dbReference type="PROSITE" id="PS00211">
    <property type="entry name" value="ABC_TRANSPORTER_1"/>
    <property type="match status" value="1"/>
</dbReference>
<dbReference type="PROSITE" id="PS50893">
    <property type="entry name" value="ABC_TRANSPORTER_2"/>
    <property type="match status" value="1"/>
</dbReference>
<dbReference type="PROSITE" id="PS51251">
    <property type="entry name" value="TAGH"/>
    <property type="match status" value="1"/>
</dbReference>
<keyword id="KW-0067">ATP-binding</keyword>
<keyword id="KW-1003">Cell membrane</keyword>
<keyword id="KW-0472">Membrane</keyword>
<keyword id="KW-0547">Nucleotide-binding</keyword>
<keyword id="KW-1278">Translocase</keyword>
<keyword id="KW-0813">Transport</keyword>
<accession>Q720Z5</accession>
<organism>
    <name type="scientific">Listeria monocytogenes serotype 4b (strain F2365)</name>
    <dbReference type="NCBI Taxonomy" id="265669"/>
    <lineage>
        <taxon>Bacteria</taxon>
        <taxon>Bacillati</taxon>
        <taxon>Bacillota</taxon>
        <taxon>Bacilli</taxon>
        <taxon>Bacillales</taxon>
        <taxon>Listeriaceae</taxon>
        <taxon>Listeria</taxon>
    </lineage>
</organism>
<comment type="function">
    <text evidence="1">Part of the ABC transporter complex TagGH involved in teichoic acids export. Responsible for energy coupling to the transport system.</text>
</comment>
<comment type="catalytic activity">
    <reaction evidence="1">
        <text>ATP + H2O + teichoic acidSide 1 = ADP + phosphate + teichoic acidSide 2.</text>
        <dbReference type="EC" id="7.5.2.4"/>
    </reaction>
</comment>
<comment type="subunit">
    <text evidence="1">The complex is composed of two ATP-binding proteins (TagH) and two transmembrane proteins (TagG).</text>
</comment>
<comment type="subcellular location">
    <subcellularLocation>
        <location evidence="1">Cell membrane</location>
        <topology evidence="1">Peripheral membrane protein</topology>
    </subcellularLocation>
</comment>
<comment type="similarity">
    <text evidence="1">Belongs to the ABC transporter superfamily. Teichoic acids exporter (TC 3.A.1.104.1) family.</text>
</comment>
<proteinExistence type="inferred from homology"/>
<reference key="1">
    <citation type="journal article" date="2004" name="Nucleic Acids Res.">
        <title>Whole genome comparisons of serotype 4b and 1/2a strains of the food-borne pathogen Listeria monocytogenes reveal new insights into the core genome components of this species.</title>
        <authorList>
            <person name="Nelson K.E."/>
            <person name="Fouts D.E."/>
            <person name="Mongodin E.F."/>
            <person name="Ravel J."/>
            <person name="DeBoy R.T."/>
            <person name="Kolonay J.F."/>
            <person name="Rasko D.A."/>
            <person name="Angiuoli S.V."/>
            <person name="Gill S.R."/>
            <person name="Paulsen I.T."/>
            <person name="Peterson J.D."/>
            <person name="White O."/>
            <person name="Nelson W.C."/>
            <person name="Nierman W.C."/>
            <person name="Beanan M.J."/>
            <person name="Brinkac L.M."/>
            <person name="Daugherty S.C."/>
            <person name="Dodson R.J."/>
            <person name="Durkin A.S."/>
            <person name="Madupu R."/>
            <person name="Haft D.H."/>
            <person name="Selengut J."/>
            <person name="Van Aken S.E."/>
            <person name="Khouri H.M."/>
            <person name="Fedorova N."/>
            <person name="Forberger H.A."/>
            <person name="Tran B."/>
            <person name="Kathariou S."/>
            <person name="Wonderling L.D."/>
            <person name="Uhlich G.A."/>
            <person name="Bayles D.O."/>
            <person name="Luchansky J.B."/>
            <person name="Fraser C.M."/>
        </authorList>
    </citation>
    <scope>NUCLEOTIDE SEQUENCE [LARGE SCALE GENOMIC DNA]</scope>
    <source>
        <strain>F2365</strain>
    </source>
</reference>
<gene>
    <name evidence="1" type="primary">tagH</name>
    <name type="ordered locus">LMOf2365_1092</name>
</gene>
<protein>
    <recommendedName>
        <fullName evidence="1">Teichoic acids export ATP-binding protein TagH</fullName>
        <ecNumber evidence="1">7.5.2.4</ecNumber>
    </recommendedName>
</protein>
<name>TAGH_LISMF</name>